<name>IDH2_SCHPO</name>
<accession>Q9USP8</accession>
<keyword id="KW-0028">Amino-acid biosynthesis</keyword>
<keyword id="KW-0460">Magnesium</keyword>
<keyword id="KW-0464">Manganese</keyword>
<keyword id="KW-0479">Metal-binding</keyword>
<keyword id="KW-0496">Mitochondrion</keyword>
<keyword id="KW-0520">NAD</keyword>
<keyword id="KW-0560">Oxidoreductase</keyword>
<keyword id="KW-1185">Reference proteome</keyword>
<keyword id="KW-0694">RNA-binding</keyword>
<keyword id="KW-0809">Transit peptide</keyword>
<keyword id="KW-0816">Tricarboxylic acid cycle</keyword>
<gene>
    <name type="primary">idh2</name>
    <name type="synonym">glu2</name>
    <name type="ORF">SPBC902.05c</name>
</gene>
<feature type="transit peptide" description="Mitochondrion" evidence="3">
    <location>
        <begin position="1"/>
        <end position="27"/>
    </location>
</feature>
<feature type="chain" id="PRO_0000014433" description="Isocitrate dehydrogenase [NAD] subunit 2, mitochondrial">
    <location>
        <begin position="28"/>
        <end position="379"/>
    </location>
</feature>
<feature type="binding site" evidence="1">
    <location>
        <position position="129"/>
    </location>
    <ligand>
        <name>substrate</name>
    </ligand>
</feature>
<feature type="binding site" evidence="1">
    <location>
        <position position="139"/>
    </location>
    <ligand>
        <name>substrate</name>
    </ligand>
</feature>
<feature type="binding site" evidence="1">
    <location>
        <position position="160"/>
    </location>
    <ligand>
        <name>substrate</name>
    </ligand>
</feature>
<feature type="binding site" evidence="2">
    <location>
        <position position="247"/>
    </location>
    <ligand>
        <name>Mg(2+)</name>
        <dbReference type="ChEBI" id="CHEBI:18420"/>
    </ligand>
</feature>
<feature type="binding site" evidence="1">
    <location>
        <position position="247"/>
    </location>
    <ligand>
        <name>substrate</name>
    </ligand>
</feature>
<feature type="binding site" evidence="2">
    <location>
        <position position="273"/>
    </location>
    <ligand>
        <name>Mg(2+)</name>
        <dbReference type="ChEBI" id="CHEBI:18420"/>
    </ligand>
</feature>
<feature type="binding site" evidence="2">
    <location>
        <position position="277"/>
    </location>
    <ligand>
        <name>Mg(2+)</name>
        <dbReference type="ChEBI" id="CHEBI:18420"/>
    </ligand>
</feature>
<feature type="site" description="Critical for catalysis" evidence="1">
    <location>
        <position position="167"/>
    </location>
</feature>
<feature type="site" description="Critical for catalysis" evidence="1">
    <location>
        <position position="214"/>
    </location>
</feature>
<protein>
    <recommendedName>
        <fullName>Isocitrate dehydrogenase [NAD] subunit 2, mitochondrial</fullName>
        <ecNumber evidence="8">1.1.1.41</ecNumber>
    </recommendedName>
    <alternativeName>
        <fullName>Isocitric dehydrogenase</fullName>
    </alternativeName>
    <alternativeName>
        <fullName>NAD(+)-specific ICDH</fullName>
    </alternativeName>
</protein>
<comment type="function">
    <text evidence="4 6">Performs an essential role in the oxidative function of the citric acid cycle and is involved in glutamate biosynthesis (PubMed:7903653). Also binds RNA; specifically to the 5'-untranslated leaders of mitochondrial mRNAs (PubMed:10975257).</text>
</comment>
<comment type="catalytic activity">
    <reaction evidence="8">
        <text>D-threo-isocitrate + NAD(+) = 2-oxoglutarate + CO2 + NADH</text>
        <dbReference type="Rhea" id="RHEA:23632"/>
        <dbReference type="ChEBI" id="CHEBI:15562"/>
        <dbReference type="ChEBI" id="CHEBI:16526"/>
        <dbReference type="ChEBI" id="CHEBI:16810"/>
        <dbReference type="ChEBI" id="CHEBI:57540"/>
        <dbReference type="ChEBI" id="CHEBI:57945"/>
        <dbReference type="EC" id="1.1.1.41"/>
    </reaction>
</comment>
<comment type="cofactor">
    <cofactor evidence="1">
        <name>Mg(2+)</name>
        <dbReference type="ChEBI" id="CHEBI:18420"/>
    </cofactor>
    <cofactor evidence="1">
        <name>Mn(2+)</name>
        <dbReference type="ChEBI" id="CHEBI:29035"/>
    </cofactor>
    <text evidence="1">Binds 1 Mg(2+) or Mn(2+) ion per subunit.</text>
</comment>
<comment type="subunit">
    <text evidence="1">Octamer of two non-identical subunits IDH1 and IDH2.</text>
</comment>
<comment type="subcellular location">
    <subcellularLocation>
        <location evidence="5">Mitochondrion</location>
    </subcellularLocation>
</comment>
<comment type="similarity">
    <text evidence="7">Belongs to the isocitrate and isopropylmalate dehydrogenases family.</text>
</comment>
<proteinExistence type="evidence at protein level"/>
<organism>
    <name type="scientific">Schizosaccharomyces pombe (strain 972 / ATCC 24843)</name>
    <name type="common">Fission yeast</name>
    <dbReference type="NCBI Taxonomy" id="284812"/>
    <lineage>
        <taxon>Eukaryota</taxon>
        <taxon>Fungi</taxon>
        <taxon>Dikarya</taxon>
        <taxon>Ascomycota</taxon>
        <taxon>Taphrinomycotina</taxon>
        <taxon>Schizosaccharomycetes</taxon>
        <taxon>Schizosaccharomycetales</taxon>
        <taxon>Schizosaccharomycetaceae</taxon>
        <taxon>Schizosaccharomyces</taxon>
    </lineage>
</organism>
<reference key="1">
    <citation type="journal article" date="2002" name="Nature">
        <title>The genome sequence of Schizosaccharomyces pombe.</title>
        <authorList>
            <person name="Wood V."/>
            <person name="Gwilliam R."/>
            <person name="Rajandream M.A."/>
            <person name="Lyne M.H."/>
            <person name="Lyne R."/>
            <person name="Stewart A."/>
            <person name="Sgouros J.G."/>
            <person name="Peat N."/>
            <person name="Hayles J."/>
            <person name="Baker S.G."/>
            <person name="Basham D."/>
            <person name="Bowman S."/>
            <person name="Brooks K."/>
            <person name="Brown D."/>
            <person name="Brown S."/>
            <person name="Chillingworth T."/>
            <person name="Churcher C.M."/>
            <person name="Collins M."/>
            <person name="Connor R."/>
            <person name="Cronin A."/>
            <person name="Davis P."/>
            <person name="Feltwell T."/>
            <person name="Fraser A."/>
            <person name="Gentles S."/>
            <person name="Goble A."/>
            <person name="Hamlin N."/>
            <person name="Harris D.E."/>
            <person name="Hidalgo J."/>
            <person name="Hodgson G."/>
            <person name="Holroyd S."/>
            <person name="Hornsby T."/>
            <person name="Howarth S."/>
            <person name="Huckle E.J."/>
            <person name="Hunt S."/>
            <person name="Jagels K."/>
            <person name="James K.D."/>
            <person name="Jones L."/>
            <person name="Jones M."/>
            <person name="Leather S."/>
            <person name="McDonald S."/>
            <person name="McLean J."/>
            <person name="Mooney P."/>
            <person name="Moule S."/>
            <person name="Mungall K.L."/>
            <person name="Murphy L.D."/>
            <person name="Niblett D."/>
            <person name="Odell C."/>
            <person name="Oliver K."/>
            <person name="O'Neil S."/>
            <person name="Pearson D."/>
            <person name="Quail M.A."/>
            <person name="Rabbinowitsch E."/>
            <person name="Rutherford K.M."/>
            <person name="Rutter S."/>
            <person name="Saunders D."/>
            <person name="Seeger K."/>
            <person name="Sharp S."/>
            <person name="Skelton J."/>
            <person name="Simmonds M.N."/>
            <person name="Squares R."/>
            <person name="Squares S."/>
            <person name="Stevens K."/>
            <person name="Taylor K."/>
            <person name="Taylor R.G."/>
            <person name="Tivey A."/>
            <person name="Walsh S.V."/>
            <person name="Warren T."/>
            <person name="Whitehead S."/>
            <person name="Woodward J.R."/>
            <person name="Volckaert G."/>
            <person name="Aert R."/>
            <person name="Robben J."/>
            <person name="Grymonprez B."/>
            <person name="Weltjens I."/>
            <person name="Vanstreels E."/>
            <person name="Rieger M."/>
            <person name="Schaefer M."/>
            <person name="Mueller-Auer S."/>
            <person name="Gabel C."/>
            <person name="Fuchs M."/>
            <person name="Duesterhoeft A."/>
            <person name="Fritzc C."/>
            <person name="Holzer E."/>
            <person name="Moestl D."/>
            <person name="Hilbert H."/>
            <person name="Borzym K."/>
            <person name="Langer I."/>
            <person name="Beck A."/>
            <person name="Lehrach H."/>
            <person name="Reinhardt R."/>
            <person name="Pohl T.M."/>
            <person name="Eger P."/>
            <person name="Zimmermann W."/>
            <person name="Wedler H."/>
            <person name="Wambutt R."/>
            <person name="Purnelle B."/>
            <person name="Goffeau A."/>
            <person name="Cadieu E."/>
            <person name="Dreano S."/>
            <person name="Gloux S."/>
            <person name="Lelaure V."/>
            <person name="Mottier S."/>
            <person name="Galibert F."/>
            <person name="Aves S.J."/>
            <person name="Xiang Z."/>
            <person name="Hunt C."/>
            <person name="Moore K."/>
            <person name="Hurst S.M."/>
            <person name="Lucas M."/>
            <person name="Rochet M."/>
            <person name="Gaillardin C."/>
            <person name="Tallada V.A."/>
            <person name="Garzon A."/>
            <person name="Thode G."/>
            <person name="Daga R.R."/>
            <person name="Cruzado L."/>
            <person name="Jimenez J."/>
            <person name="Sanchez M."/>
            <person name="del Rey F."/>
            <person name="Benito J."/>
            <person name="Dominguez A."/>
            <person name="Revuelta J.L."/>
            <person name="Moreno S."/>
            <person name="Armstrong J."/>
            <person name="Forsburg S.L."/>
            <person name="Cerutti L."/>
            <person name="Lowe T."/>
            <person name="McCombie W.R."/>
            <person name="Paulsen I."/>
            <person name="Potashkin J."/>
            <person name="Shpakovski G.V."/>
            <person name="Ussery D."/>
            <person name="Barrell B.G."/>
            <person name="Nurse P."/>
        </authorList>
    </citation>
    <scope>NUCLEOTIDE SEQUENCE [LARGE SCALE GENOMIC DNA]</scope>
    <source>
        <strain>972 / ATCC 24843</strain>
    </source>
</reference>
<reference key="2">
    <citation type="journal article" date="2011" name="Science">
        <title>Comparative functional genomics of the fission yeasts.</title>
        <authorList>
            <person name="Rhind N."/>
            <person name="Chen Z."/>
            <person name="Yassour M."/>
            <person name="Thompson D.A."/>
            <person name="Haas B.J."/>
            <person name="Habib N."/>
            <person name="Wapinski I."/>
            <person name="Roy S."/>
            <person name="Lin M.F."/>
            <person name="Heiman D.I."/>
            <person name="Young S.K."/>
            <person name="Furuya K."/>
            <person name="Guo Y."/>
            <person name="Pidoux A."/>
            <person name="Chen H.M."/>
            <person name="Robbertse B."/>
            <person name="Goldberg J.M."/>
            <person name="Aoki K."/>
            <person name="Bayne E.H."/>
            <person name="Berlin A.M."/>
            <person name="Desjardins C.A."/>
            <person name="Dobbs E."/>
            <person name="Dukaj L."/>
            <person name="Fan L."/>
            <person name="FitzGerald M.G."/>
            <person name="French C."/>
            <person name="Gujja S."/>
            <person name="Hansen K."/>
            <person name="Keifenheim D."/>
            <person name="Levin J.Z."/>
            <person name="Mosher R.A."/>
            <person name="Mueller C.A."/>
            <person name="Pfiffner J."/>
            <person name="Priest M."/>
            <person name="Russ C."/>
            <person name="Smialowska A."/>
            <person name="Swoboda P."/>
            <person name="Sykes S.M."/>
            <person name="Vaughn M."/>
            <person name="Vengrova S."/>
            <person name="Yoder R."/>
            <person name="Zeng Q."/>
            <person name="Allshire R."/>
            <person name="Baulcombe D."/>
            <person name="Birren B.W."/>
            <person name="Brown W."/>
            <person name="Ekwall K."/>
            <person name="Kellis M."/>
            <person name="Leatherwood J."/>
            <person name="Levin H."/>
            <person name="Margalit H."/>
            <person name="Martienssen R."/>
            <person name="Nieduszynski C.A."/>
            <person name="Spatafora J.W."/>
            <person name="Friedman N."/>
            <person name="Dalgaard J.Z."/>
            <person name="Baumann P."/>
            <person name="Niki H."/>
            <person name="Regev A."/>
            <person name="Nusbaum C."/>
        </authorList>
    </citation>
    <scope>REVISION OF GENE MODEL</scope>
</reference>
<reference key="3">
    <citation type="journal article" date="1993" name="FEMS Microbiol. Lett.">
        <title>Enzyme defects in glutamate-requiring strains of Schizosaccharomyces pombe.</title>
        <authorList>
            <person name="Barel I."/>
            <person name="MacDonald D.W."/>
        </authorList>
    </citation>
    <scope>FUNCTION</scope>
    <scope>CATALYTIC ACTIVITY</scope>
</reference>
<reference key="4">
    <citation type="journal article" date="2000" name="Curr. Genet.">
        <title>Isolation and RNA-binding analysis of NAD+ -isocitrate dehydrogenases from Kluyveromyces lactis and Schizosaccharomyces pombe.</title>
        <authorList>
            <person name="Elzinga S.D.J."/>
            <person name="van Oosterum K."/>
            <person name="Maat C."/>
            <person name="Grivell L.A."/>
            <person name="van der Spek H."/>
        </authorList>
    </citation>
    <scope>RNA-BINDING</scope>
</reference>
<reference key="5">
    <citation type="journal article" date="2006" name="Nat. Biotechnol.">
        <title>ORFeome cloning and global analysis of protein localization in the fission yeast Schizosaccharomyces pombe.</title>
        <authorList>
            <person name="Matsuyama A."/>
            <person name="Arai R."/>
            <person name="Yashiroda Y."/>
            <person name="Shirai A."/>
            <person name="Kamata A."/>
            <person name="Sekido S."/>
            <person name="Kobayashi Y."/>
            <person name="Hashimoto A."/>
            <person name="Hamamoto M."/>
            <person name="Hiraoka Y."/>
            <person name="Horinouchi S."/>
            <person name="Yoshida M."/>
        </authorList>
    </citation>
    <scope>SUBCELLULAR LOCATION [LARGE SCALE ANALYSIS]</scope>
</reference>
<dbReference type="EC" id="1.1.1.41" evidence="8"/>
<dbReference type="EMBL" id="CU329671">
    <property type="protein sequence ID" value="CAB62099.2"/>
    <property type="molecule type" value="Genomic_DNA"/>
</dbReference>
<dbReference type="PIR" id="T50386">
    <property type="entry name" value="T50386"/>
</dbReference>
<dbReference type="RefSeq" id="NP_595203.2">
    <property type="nucleotide sequence ID" value="NM_001021109.2"/>
</dbReference>
<dbReference type="SMR" id="Q9USP8"/>
<dbReference type="BioGRID" id="277774">
    <property type="interactions" value="12"/>
</dbReference>
<dbReference type="ComplexPortal" id="CPX-559">
    <property type="entry name" value="Mitochondrial isocitrate dehydrogenase complex (NAD+)"/>
</dbReference>
<dbReference type="FunCoup" id="Q9USP8">
    <property type="interactions" value="577"/>
</dbReference>
<dbReference type="STRING" id="284812.Q9USP8"/>
<dbReference type="PaxDb" id="4896-SPBC902.05c.1"/>
<dbReference type="EnsemblFungi" id="SPBC902.05c.1">
    <property type="protein sequence ID" value="SPBC902.05c.1:pep"/>
    <property type="gene ID" value="SPBC902.05c"/>
</dbReference>
<dbReference type="GeneID" id="2541260"/>
<dbReference type="KEGG" id="spo:2541260"/>
<dbReference type="PomBase" id="SPBC902.05c">
    <property type="gene designation" value="idh2"/>
</dbReference>
<dbReference type="VEuPathDB" id="FungiDB:SPBC902.05c"/>
<dbReference type="eggNOG" id="KOG0785">
    <property type="taxonomic scope" value="Eukaryota"/>
</dbReference>
<dbReference type="HOGENOM" id="CLU_031953_0_1_1"/>
<dbReference type="InParanoid" id="Q9USP8"/>
<dbReference type="OMA" id="VRPCRYY"/>
<dbReference type="Reactome" id="R-SPO-71403">
    <property type="pathway name" value="Citric acid cycle (TCA cycle)"/>
</dbReference>
<dbReference type="PRO" id="PR:Q9USP8"/>
<dbReference type="Proteomes" id="UP000002485">
    <property type="component" value="Chromosome II"/>
</dbReference>
<dbReference type="GO" id="GO:0045242">
    <property type="term" value="C:isocitrate dehydrogenase complex (NAD+)"/>
    <property type="evidence" value="ECO:0000266"/>
    <property type="project" value="ComplexPortal"/>
</dbReference>
<dbReference type="GO" id="GO:0005759">
    <property type="term" value="C:mitochondrial matrix"/>
    <property type="evidence" value="ECO:0000250"/>
    <property type="project" value="PomBase"/>
</dbReference>
<dbReference type="GO" id="GO:0005739">
    <property type="term" value="C:mitochondrion"/>
    <property type="evidence" value="ECO:0007005"/>
    <property type="project" value="PomBase"/>
</dbReference>
<dbReference type="GO" id="GO:0004449">
    <property type="term" value="F:isocitrate dehydrogenase (NAD+) activity"/>
    <property type="evidence" value="ECO:0007669"/>
    <property type="project" value="UniProtKB-EC"/>
</dbReference>
<dbReference type="GO" id="GO:0000287">
    <property type="term" value="F:magnesium ion binding"/>
    <property type="evidence" value="ECO:0007669"/>
    <property type="project" value="InterPro"/>
</dbReference>
<dbReference type="GO" id="GO:0051287">
    <property type="term" value="F:NAD binding"/>
    <property type="evidence" value="ECO:0007669"/>
    <property type="project" value="InterPro"/>
</dbReference>
<dbReference type="GO" id="GO:0003723">
    <property type="term" value="F:RNA binding"/>
    <property type="evidence" value="ECO:0007669"/>
    <property type="project" value="UniProtKB-KW"/>
</dbReference>
<dbReference type="GO" id="GO:0008652">
    <property type="term" value="P:amino acid biosynthetic process"/>
    <property type="evidence" value="ECO:0007669"/>
    <property type="project" value="UniProtKB-KW"/>
</dbReference>
<dbReference type="GO" id="GO:0006102">
    <property type="term" value="P:isocitrate metabolic process"/>
    <property type="evidence" value="ECO:0000318"/>
    <property type="project" value="GO_Central"/>
</dbReference>
<dbReference type="GO" id="GO:0006099">
    <property type="term" value="P:tricarboxylic acid cycle"/>
    <property type="evidence" value="ECO:0000315"/>
    <property type="project" value="PomBase"/>
</dbReference>
<dbReference type="FunFam" id="3.40.718.10:FF:000003">
    <property type="entry name" value="Isocitrate dehydrogenase [NAD] subunit, mitochondrial"/>
    <property type="match status" value="1"/>
</dbReference>
<dbReference type="Gene3D" id="3.40.718.10">
    <property type="entry name" value="Isopropylmalate Dehydrogenase"/>
    <property type="match status" value="1"/>
</dbReference>
<dbReference type="InterPro" id="IPR019818">
    <property type="entry name" value="IsoCit/isopropylmalate_DH_CS"/>
</dbReference>
<dbReference type="InterPro" id="IPR004434">
    <property type="entry name" value="Isocitrate_DH_NAD"/>
</dbReference>
<dbReference type="InterPro" id="IPR024084">
    <property type="entry name" value="IsoPropMal-DH-like_dom"/>
</dbReference>
<dbReference type="NCBIfam" id="TIGR00175">
    <property type="entry name" value="mito_nad_idh"/>
    <property type="match status" value="1"/>
</dbReference>
<dbReference type="PANTHER" id="PTHR11835">
    <property type="entry name" value="DECARBOXYLATING DEHYDROGENASES-ISOCITRATE, ISOPROPYLMALATE, TARTRATE"/>
    <property type="match status" value="1"/>
</dbReference>
<dbReference type="PANTHER" id="PTHR11835:SF34">
    <property type="entry name" value="ISOCITRATE DEHYDROGENASE [NAD] SUBUNIT ALPHA, MITOCHONDRIAL"/>
    <property type="match status" value="1"/>
</dbReference>
<dbReference type="Pfam" id="PF00180">
    <property type="entry name" value="Iso_dh"/>
    <property type="match status" value="1"/>
</dbReference>
<dbReference type="SMART" id="SM01329">
    <property type="entry name" value="Iso_dh"/>
    <property type="match status" value="1"/>
</dbReference>
<dbReference type="SUPFAM" id="SSF53659">
    <property type="entry name" value="Isocitrate/Isopropylmalate dehydrogenase-like"/>
    <property type="match status" value="1"/>
</dbReference>
<dbReference type="PROSITE" id="PS00470">
    <property type="entry name" value="IDH_IMDH"/>
    <property type="match status" value="1"/>
</dbReference>
<evidence type="ECO:0000250" key="1"/>
<evidence type="ECO:0000250" key="2">
    <source>
        <dbReference type="UniProtKB" id="P50213"/>
    </source>
</evidence>
<evidence type="ECO:0000255" key="3"/>
<evidence type="ECO:0000269" key="4">
    <source>
    </source>
</evidence>
<evidence type="ECO:0000269" key="5">
    <source>
    </source>
</evidence>
<evidence type="ECO:0000269" key="6">
    <source>
    </source>
</evidence>
<evidence type="ECO:0000305" key="7"/>
<evidence type="ECO:0000305" key="8">
    <source>
    </source>
</evidence>
<sequence>MSMLSTLRTAGSLRTFSRSACYSFQRFSSTKAAAGTYEGVKNANGNYTVTMIAGDGIGPEIAQSVERIFKAAKVPIEWERVKVYPILKNGTTTIPDDAKESVRKNKVALKGPLATPIGKGHVSMNLTLRRTFGLFANVRPCVSITGYKTPYDNVNTVLIRENTEGEYSGIEHEVIPGVVQSIKLITRAASERVIRYAFQYARQTGKNNITVVHKATIMRMADGLFLECAKELAPEYPDIELREEILDNACLKIVTDPVPYNNTVMVMPNLYGDIVSDMCAGLIGGLGLTPSGNIGNQASIFEAVHGTAPDIAGKGLANPTALLLSSVMMLKHMNLNDYAKRIESAIFDTLANNPDARTKDLGGKSNNVQYTDAIISKLK</sequence>